<evidence type="ECO:0000255" key="1">
    <source>
        <dbReference type="HAMAP-Rule" id="MF_00334"/>
    </source>
</evidence>
<name>HGD_PSEAE</name>
<reference key="1">
    <citation type="journal article" date="2000" name="Nature">
        <title>Complete genome sequence of Pseudomonas aeruginosa PAO1, an opportunistic pathogen.</title>
        <authorList>
            <person name="Stover C.K."/>
            <person name="Pham X.-Q.T."/>
            <person name="Erwin A.L."/>
            <person name="Mizoguchi S.D."/>
            <person name="Warrener P."/>
            <person name="Hickey M.J."/>
            <person name="Brinkman F.S.L."/>
            <person name="Hufnagle W.O."/>
            <person name="Kowalik D.J."/>
            <person name="Lagrou M."/>
            <person name="Garber R.L."/>
            <person name="Goltry L."/>
            <person name="Tolentino E."/>
            <person name="Westbrock-Wadman S."/>
            <person name="Yuan Y."/>
            <person name="Brody L.L."/>
            <person name="Coulter S.N."/>
            <person name="Folger K.R."/>
            <person name="Kas A."/>
            <person name="Larbig K."/>
            <person name="Lim R.M."/>
            <person name="Smith K.A."/>
            <person name="Spencer D.H."/>
            <person name="Wong G.K.-S."/>
            <person name="Wu Z."/>
            <person name="Paulsen I.T."/>
            <person name="Reizer J."/>
            <person name="Saier M.H. Jr."/>
            <person name="Hancock R.E.W."/>
            <person name="Lory S."/>
            <person name="Olson M.V."/>
        </authorList>
    </citation>
    <scope>NUCLEOTIDE SEQUENCE [LARGE SCALE GENOMIC DNA]</scope>
    <source>
        <strain>ATCC 15692 / DSM 22644 / CIP 104116 / JCM 14847 / LMG 12228 / 1C / PRS 101 / PAO1</strain>
    </source>
</reference>
<reference key="2">
    <citation type="submission" date="1998-11" db="EMBL/GenBank/DDBJ databases">
        <title>Genes encoding phenylalanine catabolism in Pseudomonas aeruginosa.</title>
        <authorList>
            <person name="Beatson S.A."/>
            <person name="Whitchurch C.B."/>
            <person name="Mattick J.S."/>
        </authorList>
    </citation>
    <scope>NUCLEOTIDE SEQUENCE [GENOMIC DNA] OF 71-236</scope>
    <source>
        <strain>ATCC 15692 / DSM 22644 / CIP 104116 / JCM 14847 / LMG 12228 / 1C / PRS 101 / PAO1</strain>
    </source>
</reference>
<feature type="chain" id="PRO_0000220249" description="Homogentisate 1,2-dioxygenase">
    <location>
        <begin position="1"/>
        <end position="432"/>
    </location>
</feature>
<feature type="active site" description="Proton acceptor" evidence="1">
    <location>
        <position position="287"/>
    </location>
</feature>
<feature type="binding site" evidence="1">
    <location>
        <position position="330"/>
    </location>
    <ligand>
        <name>Fe cation</name>
        <dbReference type="ChEBI" id="CHEBI:24875"/>
    </ligand>
</feature>
<feature type="binding site" evidence="1">
    <location>
        <position position="336"/>
    </location>
    <ligand>
        <name>Fe cation</name>
        <dbReference type="ChEBI" id="CHEBI:24875"/>
    </ligand>
</feature>
<feature type="binding site" evidence="1">
    <location>
        <position position="345"/>
    </location>
    <ligand>
        <name>homogentisate</name>
        <dbReference type="ChEBI" id="CHEBI:16169"/>
    </ligand>
</feature>
<feature type="binding site" evidence="1">
    <location>
        <position position="366"/>
    </location>
    <ligand>
        <name>Fe cation</name>
        <dbReference type="ChEBI" id="CHEBI:24875"/>
    </ligand>
</feature>
<feature type="binding site" evidence="1">
    <location>
        <position position="366"/>
    </location>
    <ligand>
        <name>homogentisate</name>
        <dbReference type="ChEBI" id="CHEBI:16169"/>
    </ligand>
</feature>
<comment type="function">
    <text evidence="1">Involved in the catabolism of homogentisate (2,5-dihydroxyphenylacetate or 2,5-OH-PhAc), a central intermediate in the degradation of phenylalanine and tyrosine. Catalyzes the oxidative ring cleavage of the aromatic ring of homogentisate to yield maleylacetoacetate.</text>
</comment>
<comment type="catalytic activity">
    <reaction evidence="1">
        <text>homogentisate + O2 = 4-maleylacetoacetate + H(+)</text>
        <dbReference type="Rhea" id="RHEA:15449"/>
        <dbReference type="ChEBI" id="CHEBI:15378"/>
        <dbReference type="ChEBI" id="CHEBI:15379"/>
        <dbReference type="ChEBI" id="CHEBI:16169"/>
        <dbReference type="ChEBI" id="CHEBI:17105"/>
        <dbReference type="EC" id="1.13.11.5"/>
    </reaction>
</comment>
<comment type="cofactor">
    <cofactor>
        <name>Fe cation</name>
        <dbReference type="ChEBI" id="CHEBI:24875"/>
    </cofactor>
</comment>
<comment type="pathway">
    <text evidence="1">Amino-acid degradation; L-phenylalanine degradation; acetoacetate and fumarate from L-phenylalanine: step 4/6.</text>
</comment>
<comment type="subunit">
    <text evidence="1">Hexamer; dimer of trimers.</text>
</comment>
<comment type="similarity">
    <text evidence="1">Belongs to the homogentisate dioxygenase family.</text>
</comment>
<protein>
    <recommendedName>
        <fullName evidence="1">Homogentisate 1,2-dioxygenase</fullName>
        <shortName evidence="1">HGDO</shortName>
        <ecNumber evidence="1">1.13.11.5</ecNumber>
    </recommendedName>
    <alternativeName>
        <fullName evidence="1">Homogentisate oxygenase</fullName>
    </alternativeName>
    <alternativeName>
        <fullName evidence="1">Homogentisic acid oxidase</fullName>
    </alternativeName>
    <alternativeName>
        <fullName evidence="1">Homogentisicase</fullName>
    </alternativeName>
</protein>
<dbReference type="EC" id="1.13.11.5" evidence="1"/>
<dbReference type="EMBL" id="AE004091">
    <property type="protein sequence ID" value="AAG05397.1"/>
    <property type="molecule type" value="Genomic_DNA"/>
</dbReference>
<dbReference type="EMBL" id="AF109214">
    <property type="protein sequence ID" value="AAD23385.1"/>
    <property type="molecule type" value="Genomic_DNA"/>
</dbReference>
<dbReference type="PIR" id="F83394">
    <property type="entry name" value="F83394"/>
</dbReference>
<dbReference type="RefSeq" id="NP_250699.1">
    <property type="nucleotide sequence ID" value="NC_002516.2"/>
</dbReference>
<dbReference type="RefSeq" id="WP_003100397.1">
    <property type="nucleotide sequence ID" value="NZ_QZGE01000026.1"/>
</dbReference>
<dbReference type="SMR" id="Q9X4G0"/>
<dbReference type="STRING" id="208964.PA2009"/>
<dbReference type="PaxDb" id="208964-PA2009"/>
<dbReference type="GeneID" id="877745"/>
<dbReference type="KEGG" id="pae:PA2009"/>
<dbReference type="PATRIC" id="fig|208964.12.peg.2093"/>
<dbReference type="PseudoCAP" id="PA2009"/>
<dbReference type="HOGENOM" id="CLU_027174_0_0_6"/>
<dbReference type="InParanoid" id="Q9X4G0"/>
<dbReference type="OrthoDB" id="9811253at2"/>
<dbReference type="PhylomeDB" id="Q9X4G0"/>
<dbReference type="BioCyc" id="PAER208964:G1FZ6-2047-MONOMER"/>
<dbReference type="UniPathway" id="UPA00139">
    <property type="reaction ID" value="UER00339"/>
</dbReference>
<dbReference type="PHI-base" id="PHI:5042"/>
<dbReference type="Proteomes" id="UP000002438">
    <property type="component" value="Chromosome"/>
</dbReference>
<dbReference type="GO" id="GO:0004411">
    <property type="term" value="F:homogentisate 1,2-dioxygenase activity"/>
    <property type="evidence" value="ECO:0000318"/>
    <property type="project" value="GO_Central"/>
</dbReference>
<dbReference type="GO" id="GO:0005506">
    <property type="term" value="F:iron ion binding"/>
    <property type="evidence" value="ECO:0007669"/>
    <property type="project" value="UniProtKB-UniRule"/>
</dbReference>
<dbReference type="GO" id="GO:0006559">
    <property type="term" value="P:L-phenylalanine catabolic process"/>
    <property type="evidence" value="ECO:0000318"/>
    <property type="project" value="GO_Central"/>
</dbReference>
<dbReference type="GO" id="GO:0006572">
    <property type="term" value="P:tyrosine catabolic process"/>
    <property type="evidence" value="ECO:0007669"/>
    <property type="project" value="UniProtKB-UniRule"/>
</dbReference>
<dbReference type="CDD" id="cd07000">
    <property type="entry name" value="cupin_HGO_N"/>
    <property type="match status" value="1"/>
</dbReference>
<dbReference type="FunFam" id="2.60.120.10:FF:000036">
    <property type="entry name" value="Homogentisate 1,2-dioxygenase"/>
    <property type="match status" value="1"/>
</dbReference>
<dbReference type="Gene3D" id="2.60.120.10">
    <property type="entry name" value="Jelly Rolls"/>
    <property type="match status" value="1"/>
</dbReference>
<dbReference type="HAMAP" id="MF_00334">
    <property type="entry name" value="Homogentis_dioxygen"/>
    <property type="match status" value="1"/>
</dbReference>
<dbReference type="InterPro" id="IPR046451">
    <property type="entry name" value="HgmA_C"/>
</dbReference>
<dbReference type="InterPro" id="IPR046452">
    <property type="entry name" value="HgmA_N"/>
</dbReference>
<dbReference type="InterPro" id="IPR005708">
    <property type="entry name" value="Homogentis_dOase"/>
</dbReference>
<dbReference type="InterPro" id="IPR022950">
    <property type="entry name" value="Homogentis_dOase_bac"/>
</dbReference>
<dbReference type="InterPro" id="IPR014710">
    <property type="entry name" value="RmlC-like_jellyroll"/>
</dbReference>
<dbReference type="InterPro" id="IPR011051">
    <property type="entry name" value="RmlC_Cupin_sf"/>
</dbReference>
<dbReference type="NCBIfam" id="TIGR01015">
    <property type="entry name" value="hmgA"/>
    <property type="match status" value="1"/>
</dbReference>
<dbReference type="PANTHER" id="PTHR11056">
    <property type="entry name" value="HOMOGENTISATE 1,2-DIOXYGENASE"/>
    <property type="match status" value="1"/>
</dbReference>
<dbReference type="PANTHER" id="PTHR11056:SF0">
    <property type="entry name" value="HOMOGENTISATE 1,2-DIOXYGENASE"/>
    <property type="match status" value="1"/>
</dbReference>
<dbReference type="Pfam" id="PF04209">
    <property type="entry name" value="HgmA_C"/>
    <property type="match status" value="1"/>
</dbReference>
<dbReference type="Pfam" id="PF20510">
    <property type="entry name" value="HgmA_N"/>
    <property type="match status" value="1"/>
</dbReference>
<dbReference type="SUPFAM" id="SSF51182">
    <property type="entry name" value="RmlC-like cupins"/>
    <property type="match status" value="1"/>
</dbReference>
<gene>
    <name evidence="1" type="primary">hmgA</name>
    <name type="ordered locus">PA2009</name>
</gene>
<keyword id="KW-0223">Dioxygenase</keyword>
<keyword id="KW-0408">Iron</keyword>
<keyword id="KW-0479">Metal-binding</keyword>
<keyword id="KW-0560">Oxidoreductase</keyword>
<keyword id="KW-0585">Phenylalanine catabolism</keyword>
<keyword id="KW-1185">Reference proteome</keyword>
<keyword id="KW-0828">Tyrosine catabolism</keyword>
<sequence>MNLDSTALAYQSGFGNEFSSEALPGALPVGQNSPQKAPYGLYAELLSGTAFTMARSEARRTWLYRITPSAKHPPFRRLERQIAGAELDAPTPNRLRWDPLALPEQPTDFLDGLLRMAANAPGDKPAGVSIYQYLANRSMERCFYDADGELLLVPQLGRLRLCTELGALQVEPLEIAVIPRGMKFRVELLDGEARGYIAENHGAPLRLPDLGPIGSNGLANPRDFLTPVARYEDSRQPLQLVQKYLGELWACELDHSPLDVVAWHGNNVPYKYDLRRFNTIGTVSFDHPDPSIFTVLTSPTSVPGLANIDFVIFPPRWMVAENTFRPPWFHRNLMNEFMGLIQGAYDAKAGGFVPGGASLHSCMSAHGPDAESCDKAIAADLKPHRIDQTMAFMFETSQVLRPSRAALETPALQNDYDACWASLVSTFNPQRR</sequence>
<organism>
    <name type="scientific">Pseudomonas aeruginosa (strain ATCC 15692 / DSM 22644 / CIP 104116 / JCM 14847 / LMG 12228 / 1C / PRS 101 / PAO1)</name>
    <dbReference type="NCBI Taxonomy" id="208964"/>
    <lineage>
        <taxon>Bacteria</taxon>
        <taxon>Pseudomonadati</taxon>
        <taxon>Pseudomonadota</taxon>
        <taxon>Gammaproteobacteria</taxon>
        <taxon>Pseudomonadales</taxon>
        <taxon>Pseudomonadaceae</taxon>
        <taxon>Pseudomonas</taxon>
    </lineage>
</organism>
<proteinExistence type="inferred from homology"/>
<accession>Q9X4G0</accession>